<organism>
    <name type="scientific">Kocuria rhizophila (strain ATCC 9341 / DSM 348 / NBRC 103217 / DC2201)</name>
    <dbReference type="NCBI Taxonomy" id="378753"/>
    <lineage>
        <taxon>Bacteria</taxon>
        <taxon>Bacillati</taxon>
        <taxon>Actinomycetota</taxon>
        <taxon>Actinomycetes</taxon>
        <taxon>Micrococcales</taxon>
        <taxon>Micrococcaceae</taxon>
        <taxon>Kocuria</taxon>
    </lineage>
</organism>
<accession>B2GHI7</accession>
<dbReference type="EC" id="4.2.1.-" evidence="1"/>
<dbReference type="EMBL" id="AP009152">
    <property type="protein sequence ID" value="BAG30463.1"/>
    <property type="molecule type" value="Genomic_DNA"/>
</dbReference>
<dbReference type="SMR" id="B2GHI7"/>
<dbReference type="STRING" id="378753.KRH_21160"/>
<dbReference type="KEGG" id="krh:KRH_21160"/>
<dbReference type="eggNOG" id="COG4336">
    <property type="taxonomic scope" value="Bacteria"/>
</dbReference>
<dbReference type="HOGENOM" id="CLU_651780_0_0_11"/>
<dbReference type="Proteomes" id="UP000008838">
    <property type="component" value="Chromosome"/>
</dbReference>
<dbReference type="GO" id="GO:0016829">
    <property type="term" value="F:lyase activity"/>
    <property type="evidence" value="ECO:0007669"/>
    <property type="project" value="UniProtKB-KW"/>
</dbReference>
<dbReference type="Gene3D" id="3.40.1640.10">
    <property type="entry name" value="PSTPO5379-like"/>
    <property type="match status" value="1"/>
</dbReference>
<dbReference type="Gene3D" id="3.30.2040.10">
    <property type="entry name" value="PSTPO5379-like domain"/>
    <property type="match status" value="1"/>
</dbReference>
<dbReference type="InterPro" id="IPR009906">
    <property type="entry name" value="D-Glu_cyclase"/>
</dbReference>
<dbReference type="InterPro" id="IPR038021">
    <property type="entry name" value="Putative_hydro-lyase"/>
</dbReference>
<dbReference type="PANTHER" id="PTHR32022">
    <property type="entry name" value="D-GLUTAMATE CYCLASE, MITOCHONDRIAL"/>
    <property type="match status" value="1"/>
</dbReference>
<dbReference type="PANTHER" id="PTHR32022:SF10">
    <property type="entry name" value="D-GLUTAMATE CYCLASE, MITOCHONDRIAL"/>
    <property type="match status" value="1"/>
</dbReference>
<dbReference type="Pfam" id="PF07286">
    <property type="entry name" value="D-Glu_cyclase"/>
    <property type="match status" value="1"/>
</dbReference>
<dbReference type="SUPFAM" id="SSF160920">
    <property type="entry name" value="PSTPO5379-like"/>
    <property type="match status" value="1"/>
</dbReference>
<reference key="1">
    <citation type="journal article" date="2008" name="J. Bacteriol.">
        <title>Complete genome sequence of the soil actinomycete Kocuria rhizophila.</title>
        <authorList>
            <person name="Takarada H."/>
            <person name="Sekine M."/>
            <person name="Kosugi H."/>
            <person name="Matsuo Y."/>
            <person name="Fujisawa T."/>
            <person name="Omata S."/>
            <person name="Kishi E."/>
            <person name="Shimizu A."/>
            <person name="Tsukatani N."/>
            <person name="Tanikawa S."/>
            <person name="Fujita N."/>
            <person name="Harayama S."/>
        </authorList>
    </citation>
    <scope>NUCLEOTIDE SEQUENCE [LARGE SCALE GENOMIC DNA]</scope>
    <source>
        <strain>ATCC 9341 / DSM 348 / NBRC 103217 / DC2201</strain>
    </source>
</reference>
<gene>
    <name type="ordered locus">KRH_21160</name>
</gene>
<name>Y2116_KOCRD</name>
<protein>
    <recommendedName>
        <fullName>Putative hydro-lyase KRH_21160</fullName>
        <ecNumber evidence="1">4.2.1.-</ecNumber>
    </recommendedName>
</protein>
<feature type="chain" id="PRO_0000379842" description="Putative hydro-lyase KRH_21160">
    <location>
        <begin position="1"/>
        <end position="421"/>
    </location>
</feature>
<feature type="region of interest" description="Disordered" evidence="2">
    <location>
        <begin position="200"/>
        <end position="298"/>
    </location>
</feature>
<feature type="region of interest" description="Disordered" evidence="2">
    <location>
        <begin position="312"/>
        <end position="421"/>
    </location>
</feature>
<feature type="compositionally biased region" description="Basic residues" evidence="2">
    <location>
        <begin position="224"/>
        <end position="237"/>
    </location>
</feature>
<feature type="compositionally biased region" description="Low complexity" evidence="2">
    <location>
        <begin position="243"/>
        <end position="260"/>
    </location>
</feature>
<feature type="compositionally biased region" description="Low complexity" evidence="2">
    <location>
        <begin position="370"/>
        <end position="380"/>
    </location>
</feature>
<proteinExistence type="inferred from homology"/>
<comment type="similarity">
    <text evidence="3">Belongs to the D-glutamate cyclase family.</text>
</comment>
<evidence type="ECO:0000255" key="1">
    <source>
        <dbReference type="HAMAP-Rule" id="MF_01830"/>
    </source>
</evidence>
<evidence type="ECO:0000256" key="2">
    <source>
        <dbReference type="SAM" id="MobiDB-lite"/>
    </source>
</evidence>
<evidence type="ECO:0000305" key="3"/>
<keyword id="KW-0456">Lyase</keyword>
<keyword id="KW-1185">Reference proteome</keyword>
<sequence length="421" mass="45083">MDETTLTPDRARQRFRAGLVRPAAGMAPGHAQANLVIVPRELAFDVLLFAPRNPKPCPVLGVLDAGETTGALLPGGDIRTDVPQYVVYENGVEVARPHDITPYWREDLVTVMLGCSFTFEDALQAHGIRLAHIDQGVNVPMYRTSRRCESAGRLSGPLVVSMRPVPAARVADAVRITSRYPAVHGAPVHVGDPGALGSRTWGHRTSATPCGSPPARFPCSGRAGSRRRPRWWSRLRRSPSPTPRATCSSPTPGTPTTRCPDGARERGGRALVHPCGVRSLPTRQPQPRPAVSRGSPVTPVARRRRLWLAALTRAGRGSRPVRHPGSPAATVPPGPGRRTPAPRAPRRCAPRSGRGTPCRRASRGTPGASSRGPGPCPRAAPVRRRPPPAPGGSAGSRPTWRPRRRSPALPAPRTRCPAVSR</sequence>